<gene>
    <name evidence="1" type="primary">rpmA</name>
    <name type="ordered locus">Cag_0863</name>
</gene>
<proteinExistence type="inferred from homology"/>
<name>RL27_CHLCH</name>
<reference key="1">
    <citation type="submission" date="2005-08" db="EMBL/GenBank/DDBJ databases">
        <title>Complete sequence of Chlorobium chlorochromatii CaD3.</title>
        <authorList>
            <consortium name="US DOE Joint Genome Institute"/>
            <person name="Copeland A."/>
            <person name="Lucas S."/>
            <person name="Lapidus A."/>
            <person name="Barry K."/>
            <person name="Detter J.C."/>
            <person name="Glavina T."/>
            <person name="Hammon N."/>
            <person name="Israni S."/>
            <person name="Pitluck S."/>
            <person name="Bryant D."/>
            <person name="Schmutz J."/>
            <person name="Larimer F."/>
            <person name="Land M."/>
            <person name="Kyrpides N."/>
            <person name="Ivanova N."/>
            <person name="Richardson P."/>
        </authorList>
    </citation>
    <scope>NUCLEOTIDE SEQUENCE [LARGE SCALE GENOMIC DNA]</scope>
    <source>
        <strain>CaD3</strain>
    </source>
</reference>
<dbReference type="EMBL" id="CP000108">
    <property type="protein sequence ID" value="ABB28128.1"/>
    <property type="molecule type" value="Genomic_DNA"/>
</dbReference>
<dbReference type="SMR" id="Q3AS97"/>
<dbReference type="STRING" id="340177.Cag_0863"/>
<dbReference type="KEGG" id="cch:Cag_0863"/>
<dbReference type="eggNOG" id="COG0211">
    <property type="taxonomic scope" value="Bacteria"/>
</dbReference>
<dbReference type="HOGENOM" id="CLU_095424_4_0_10"/>
<dbReference type="OrthoDB" id="9803474at2"/>
<dbReference type="GO" id="GO:1990904">
    <property type="term" value="C:ribonucleoprotein complex"/>
    <property type="evidence" value="ECO:0007669"/>
    <property type="project" value="UniProtKB-KW"/>
</dbReference>
<dbReference type="GO" id="GO:0005840">
    <property type="term" value="C:ribosome"/>
    <property type="evidence" value="ECO:0007669"/>
    <property type="project" value="UniProtKB-KW"/>
</dbReference>
<dbReference type="GO" id="GO:0003735">
    <property type="term" value="F:structural constituent of ribosome"/>
    <property type="evidence" value="ECO:0007669"/>
    <property type="project" value="InterPro"/>
</dbReference>
<dbReference type="GO" id="GO:0006412">
    <property type="term" value="P:translation"/>
    <property type="evidence" value="ECO:0007669"/>
    <property type="project" value="UniProtKB-UniRule"/>
</dbReference>
<dbReference type="FunFam" id="2.40.50.100:FF:000020">
    <property type="entry name" value="50S ribosomal protein L27"/>
    <property type="match status" value="1"/>
</dbReference>
<dbReference type="Gene3D" id="2.40.50.100">
    <property type="match status" value="1"/>
</dbReference>
<dbReference type="HAMAP" id="MF_00539">
    <property type="entry name" value="Ribosomal_bL27"/>
    <property type="match status" value="1"/>
</dbReference>
<dbReference type="InterPro" id="IPR001684">
    <property type="entry name" value="Ribosomal_bL27"/>
</dbReference>
<dbReference type="InterPro" id="IPR018261">
    <property type="entry name" value="Ribosomal_bL27_CS"/>
</dbReference>
<dbReference type="NCBIfam" id="TIGR00062">
    <property type="entry name" value="L27"/>
    <property type="match status" value="1"/>
</dbReference>
<dbReference type="PANTHER" id="PTHR15893:SF0">
    <property type="entry name" value="LARGE RIBOSOMAL SUBUNIT PROTEIN BL27M"/>
    <property type="match status" value="1"/>
</dbReference>
<dbReference type="PANTHER" id="PTHR15893">
    <property type="entry name" value="RIBOSOMAL PROTEIN L27"/>
    <property type="match status" value="1"/>
</dbReference>
<dbReference type="Pfam" id="PF01016">
    <property type="entry name" value="Ribosomal_L27"/>
    <property type="match status" value="1"/>
</dbReference>
<dbReference type="PRINTS" id="PR00063">
    <property type="entry name" value="RIBOSOMALL27"/>
</dbReference>
<dbReference type="SUPFAM" id="SSF110324">
    <property type="entry name" value="Ribosomal L27 protein-like"/>
    <property type="match status" value="1"/>
</dbReference>
<dbReference type="PROSITE" id="PS00831">
    <property type="entry name" value="RIBOSOMAL_L27"/>
    <property type="match status" value="1"/>
</dbReference>
<accession>Q3AS97</accession>
<feature type="chain" id="PRO_1000017446" description="Large ribosomal subunit protein bL27">
    <location>
        <begin position="1"/>
        <end position="85"/>
    </location>
</feature>
<feature type="region of interest" description="Disordered" evidence="2">
    <location>
        <begin position="1"/>
        <end position="21"/>
    </location>
</feature>
<sequence length="85" mass="8805">MAHKKGGGSTKNGRDSNPKYLGVKAAGGSTVAAGTIILRQRGTVIKPGVNAGIGRDHTIFALVDGIVSFRNGRNNKKQVSVEPCC</sequence>
<comment type="similarity">
    <text evidence="1">Belongs to the bacterial ribosomal protein bL27 family.</text>
</comment>
<keyword id="KW-0687">Ribonucleoprotein</keyword>
<keyword id="KW-0689">Ribosomal protein</keyword>
<organism>
    <name type="scientific">Chlorobium chlorochromatii (strain CaD3)</name>
    <dbReference type="NCBI Taxonomy" id="340177"/>
    <lineage>
        <taxon>Bacteria</taxon>
        <taxon>Pseudomonadati</taxon>
        <taxon>Chlorobiota</taxon>
        <taxon>Chlorobiia</taxon>
        <taxon>Chlorobiales</taxon>
        <taxon>Chlorobiaceae</taxon>
        <taxon>Chlorobium/Pelodictyon group</taxon>
        <taxon>Chlorobium</taxon>
    </lineage>
</organism>
<evidence type="ECO:0000255" key="1">
    <source>
        <dbReference type="HAMAP-Rule" id="MF_00539"/>
    </source>
</evidence>
<evidence type="ECO:0000256" key="2">
    <source>
        <dbReference type="SAM" id="MobiDB-lite"/>
    </source>
</evidence>
<evidence type="ECO:0000305" key="3"/>
<protein>
    <recommendedName>
        <fullName evidence="1">Large ribosomal subunit protein bL27</fullName>
    </recommendedName>
    <alternativeName>
        <fullName evidence="3">50S ribosomal protein L27</fullName>
    </alternativeName>
</protein>